<protein>
    <recommendedName>
        <fullName>Dapper 1-B</fullName>
        <shortName>xDpr</shortName>
    </recommendedName>
    <alternativeName>
        <fullName>Dapper1a</fullName>
        <shortName>XDpr1a</shortName>
    </alternativeName>
</protein>
<name>DCT1B_XENLA</name>
<evidence type="ECO:0000250" key="1"/>
<evidence type="ECO:0000255" key="2"/>
<evidence type="ECO:0000256" key="3">
    <source>
        <dbReference type="SAM" id="MobiDB-lite"/>
    </source>
</evidence>
<evidence type="ECO:0000269" key="4">
    <source>
    </source>
</evidence>
<evidence type="ECO:0000269" key="5">
    <source>
    </source>
</evidence>
<evidence type="ECO:0000269" key="6">
    <source>
    </source>
</evidence>
<evidence type="ECO:0000269" key="7">
    <source>
    </source>
</evidence>
<evidence type="ECO:0000305" key="8"/>
<gene>
    <name type="primary">dact1-b</name>
</gene>
<accession>Q8QG92</accession>
<accession>Q6DDX1</accession>
<dbReference type="EMBL" id="AF488776">
    <property type="protein sequence ID" value="AAM12548.1"/>
    <property type="molecule type" value="mRNA"/>
</dbReference>
<dbReference type="EMBL" id="BC077380">
    <property type="protein sequence ID" value="AAH77380.1"/>
    <property type="molecule type" value="mRNA"/>
</dbReference>
<dbReference type="SMR" id="Q8QG92"/>
<dbReference type="ELM" id="Q8QG92"/>
<dbReference type="IntAct" id="Q8QG92">
    <property type="interactions" value="2"/>
</dbReference>
<dbReference type="AGR" id="Xenbase:XB-GENE-478643"/>
<dbReference type="Xenbase" id="XB-GENE-478643">
    <property type="gene designation" value="dact1.L"/>
</dbReference>
<dbReference type="Proteomes" id="UP000186698">
    <property type="component" value="Unplaced"/>
</dbReference>
<dbReference type="GO" id="GO:0005737">
    <property type="term" value="C:cytoplasm"/>
    <property type="evidence" value="ECO:0000318"/>
    <property type="project" value="GO_Central"/>
</dbReference>
<dbReference type="GO" id="GO:0005634">
    <property type="term" value="C:nucleus"/>
    <property type="evidence" value="ECO:0007669"/>
    <property type="project" value="UniProtKB-SubCell"/>
</dbReference>
<dbReference type="GO" id="GO:0090090">
    <property type="term" value="P:negative regulation of canonical Wnt signaling pathway"/>
    <property type="evidence" value="ECO:0000318"/>
    <property type="project" value="GO_Central"/>
</dbReference>
<dbReference type="GO" id="GO:0046329">
    <property type="term" value="P:negative regulation of JNK cascade"/>
    <property type="evidence" value="ECO:0000314"/>
    <property type="project" value="UniProtKB"/>
</dbReference>
<dbReference type="GO" id="GO:0030178">
    <property type="term" value="P:negative regulation of Wnt signaling pathway"/>
    <property type="evidence" value="ECO:0000314"/>
    <property type="project" value="UniProtKB"/>
</dbReference>
<dbReference type="GO" id="GO:0007399">
    <property type="term" value="P:nervous system development"/>
    <property type="evidence" value="ECO:0007669"/>
    <property type="project" value="UniProtKB-KW"/>
</dbReference>
<dbReference type="GO" id="GO:2000095">
    <property type="term" value="P:regulation of Wnt signaling pathway, planar cell polarity pathway"/>
    <property type="evidence" value="ECO:0000318"/>
    <property type="project" value="GO_Central"/>
</dbReference>
<dbReference type="GO" id="GO:0016055">
    <property type="term" value="P:Wnt signaling pathway"/>
    <property type="evidence" value="ECO:0007669"/>
    <property type="project" value="UniProtKB-KW"/>
</dbReference>
<dbReference type="InterPro" id="IPR024843">
    <property type="entry name" value="Dapper"/>
</dbReference>
<dbReference type="PANTHER" id="PTHR15919:SF12">
    <property type="entry name" value="DAPPER HOMOLOG 1"/>
    <property type="match status" value="1"/>
</dbReference>
<dbReference type="PANTHER" id="PTHR15919">
    <property type="entry name" value="DAPPER-RELATED"/>
    <property type="match status" value="1"/>
</dbReference>
<dbReference type="Pfam" id="PF15268">
    <property type="entry name" value="Dapper"/>
    <property type="match status" value="2"/>
</dbReference>
<proteinExistence type="evidence at protein level"/>
<feature type="chain" id="PRO_0000191356" description="Dapper 1-B">
    <location>
        <begin position="1"/>
        <end position="824"/>
    </location>
</feature>
<feature type="region of interest" description="Disordered" evidence="3">
    <location>
        <begin position="1"/>
        <end position="33"/>
    </location>
</feature>
<feature type="region of interest" description="Interaction with tcf7l1-A" evidence="1">
    <location>
        <begin position="2"/>
        <end position="343"/>
    </location>
</feature>
<feature type="region of interest" description="Disordered" evidence="3">
    <location>
        <begin position="131"/>
        <end position="150"/>
    </location>
</feature>
<feature type="region of interest" description="Disordered" evidence="3">
    <location>
        <begin position="515"/>
        <end position="534"/>
    </location>
</feature>
<feature type="coiled-coil region" evidence="2">
    <location>
        <begin position="84"/>
        <end position="139"/>
    </location>
</feature>
<feature type="short sequence motif" description="PDZ-binding">
    <location>
        <begin position="821"/>
        <end position="824"/>
    </location>
</feature>
<feature type="compositionally biased region" description="Basic and acidic residues" evidence="3">
    <location>
        <begin position="16"/>
        <end position="33"/>
    </location>
</feature>
<feature type="compositionally biased region" description="Basic and acidic residues" evidence="3">
    <location>
        <begin position="520"/>
        <end position="530"/>
    </location>
</feature>
<feature type="mutagenesis site" description="Abrogates binding to dvl2." evidence="4">
    <location>
        <begin position="821"/>
        <end position="824"/>
    </location>
</feature>
<feature type="mutagenesis site" description="Abrogates binding to dvl2 and abolishes phosphorylation by CaMK1D." evidence="4 7">
    <original>T</original>
    <variation>N</variation>
    <location>
        <position position="822"/>
    </location>
</feature>
<feature type="sequence conflict" description="In Ref. 2; AAH77380." evidence="8" ref="2">
    <original>E</original>
    <variation>G</variation>
    <location>
        <position position="228"/>
    </location>
</feature>
<reference key="1">
    <citation type="journal article" date="2002" name="Dev. Cell">
        <title>Dapper, a Dishevelled-associated antagonist of beta-catenin and JNK signaling, is required for notochord formation.</title>
        <authorList>
            <person name="Cheyette B.N.R."/>
            <person name="Waxman J.S."/>
            <person name="Miller J.R."/>
            <person name="Takemaru K."/>
            <person name="Sheldahl L.C."/>
            <person name="Khlebtsova N."/>
            <person name="Fox E.P."/>
            <person name="Earnest T.N."/>
            <person name="Moon R.T."/>
        </authorList>
    </citation>
    <scope>NUCLEOTIDE SEQUENCE [MRNA]</scope>
    <scope>FUNCTION</scope>
    <scope>INTERACTION WITH DVL2</scope>
    <scope>SUBCELLULAR LOCATION</scope>
    <scope>TISSUE SPECIFICITY</scope>
    <scope>MUTAGENESIS OF THR-822 AND 821-MET--VAL-824</scope>
    <source>
        <tissue>Oocyte</tissue>
    </source>
</reference>
<reference key="2">
    <citation type="submission" date="2004-07" db="EMBL/GenBank/DDBJ databases">
        <authorList>
            <consortium name="NIH - Xenopus Gene Collection (XGC) project"/>
        </authorList>
    </citation>
    <scope>NUCLEOTIDE SEQUENCE [LARGE SCALE MRNA]</scope>
    <source>
        <tissue>Embryo</tissue>
    </source>
</reference>
<reference key="3">
    <citation type="journal article" date="2004" name="Development">
        <title>The involvement of Frodo in TCF-dependent signaling and neural tissue development.</title>
        <authorList>
            <person name="Hikasa H."/>
            <person name="Sokol S.Y."/>
        </authorList>
    </citation>
    <scope>FUNCTION</scope>
</reference>
<reference key="4">
    <citation type="journal article" date="2006" name="Dev. Cell">
        <title>Frodo links Dishevelled to the p120-catenin/Kaiso pathway: distinct catenin subfamilies promote Wnt signals.</title>
        <authorList>
            <person name="Park J.I."/>
            <person name="Ji H."/>
            <person name="Jun S."/>
            <person name="Gu D."/>
            <person name="Hikasa H."/>
            <person name="Li L."/>
            <person name="Sokol S.Y."/>
            <person name="McCrea P.D."/>
        </authorList>
    </citation>
    <scope>FUNCTION</scope>
</reference>
<reference key="5">
    <citation type="journal article" date="2009" name="PLoS ONE">
        <title>Dpr Acts as a molecular switch, inhibiting Wnt signaling when unphosphorylated, but promoting Wnt signaling when phosphorylated by casein kinase Idelta/epsilon.</title>
        <authorList>
            <person name="Teran E."/>
            <person name="Branscomb A.D."/>
            <person name="Seeling J.M."/>
        </authorList>
    </citation>
    <scope>FUNCTION</scope>
    <scope>PHOSPHORYLATION</scope>
    <scope>MUTAGENESIS OF THR-822</scope>
</reference>
<sequence>MKPIPAAPEPLGQHQDSPRRKDKGEAESERQRTRERLEATLAGLAELGHLRHRQEVLIKSVLSPGTRTHGDAAARTGDNPRSLEEKFLEDNILLLKKQLNCLRKRDAGLLSQLHELDKQINDLRIDVEKTEEHLETDSRPSSGFYELSDGTSGSLSNSSNSVFSECLSSCHSSTCFCNPLETSLNLTDGQAKSADDFLEWLDYRESQHETGTVRRSFSAPHSNSVDIEADVHPKYQCDLVSKNGNDIYRYPSPLHAVAVQSPMFLLSVMGNIKAEEPEEGIDHNDNDDCIVPELDHLKDEDSFLHQSSLCSLPLSSAKKMDGYILSIIQKKAHPVRTNKPRTSVNADPGKGILRHGSMCVKQTGGVSQSNAVNLKNSKQTCLHSTGMIAVDNSTYPSLKQCSKESLSEQLESKRMPSISTYPSCNVNELQSQNNSRNTVKSVCQGLARGSVAMTSNVQKENVTPNALANLSNTSSSVCNVTPGESMQNSPLLPQEIKVVPPVKRVSPQNTLLSYHASSSFDERPPLDFKSEGSSSQSLDEGLLVNAHYIPAQQQGVKLHKHTKYVKIVKSSTLKHRANVQYVAENGSQTLKEKSKVVGKKCRFPDDLDTNKKVKKSTLRVKKTAHPHFEPAVVGRNPVAVRSGSKSHGHSKDVVLAKPKHKRGDYRRWKSSAEISYEEALRRARRRAQGEMVGVYAQVPFPYSSPYAYIASDSEYSAECESLFHSTVVDTSEDEQSNYTTNCFGDSESSLSEVEFVGESTTSSDTDESGGLIWSQFVQTLPMQATATAELQTTAKAFVKIKASHNLKKKILRFRSGSLKLMTTV</sequence>
<comment type="function">
    <text evidence="4 5 6 7">Involved in regulation of intracellular signaling pathways during development. Specifically thought to play a role in canonical and/or non-canonical Wnt signaling pathways through interaction with DSH (Dishevelled) family proteins. Binds to dvl2 to regulate the degradation of beta-catenin (ctnnb1-A and possibly ctnnb1-B), thereby modulating the transcriptional activation of target genes of the Wnt signaling pathway. Seems to promote beta-catenin degradation if not phosphorylated and to block beta-catenin degradation if phosphorylated by CaMK1D. Involved in regulation of catenin delta/ctnnd1 protein level. May also bind to and directly stimulate the activity of tcf7l1-A. Also regulates the activation by dvl2 of jnk, a component of ctnnb1/beta-catenin-independent frizzled signaling. Required for notochord and head formation.</text>
</comment>
<comment type="subunit">
    <text evidence="1 4">Interacts with dbf4 and tcf7l1-A (By similarity). Interacts with dvl2/dsh; the interaction is required for dact1-b phosphorylation by CaMK1D and seems to become disrupted by the phosphorylation.</text>
</comment>
<comment type="interaction">
    <interactant intactId="EBI-6257549">
        <id>Q8QG92</id>
    </interactant>
    <interactant intactId="EBI-6257503">
        <id>P51142</id>
        <label>dvl2</label>
    </interactant>
    <organismsDiffer>false</organismsDiffer>
    <experiments>2</experiments>
</comment>
<comment type="subcellular location">
    <subcellularLocation>
        <location evidence="4">Cytoplasm</location>
    </subcellularLocation>
    <subcellularLocation>
        <location evidence="4">Nucleus</location>
    </subcellularLocation>
</comment>
<comment type="tissue specificity">
    <text evidence="4">Expressed both in the dorsal lip in early gastrula and throughout the posterior presumptive ectoderm in early neurula. Expressed in the dorsal neural folds at the tailbud stage and highly expressed in the tadpole head, including the brain, retina and cartilaginous branchial arch derivatives.</text>
</comment>
<comment type="developmental stage">
    <text>Expressed both maternally and zygotically.</text>
</comment>
<comment type="domain">
    <text>The C-terminal PDZ-binding motif may mediate interaction with the PDZ domains of DSH (Dishevelled) family proteins.</text>
</comment>
<comment type="PTM">
    <text evidence="7">Phosphorylated by CaMK1D; the phosphorylation requires binding to dvl2/dsh.</text>
</comment>
<comment type="miscellaneous">
    <text>Named 'dapper', an antonym of dishevelled, because it acts as an antagonist of dvl2/dsh.</text>
</comment>
<comment type="similarity">
    <text evidence="8">Belongs to the dapper family.</text>
</comment>
<keyword id="KW-0175">Coiled coil</keyword>
<keyword id="KW-0963">Cytoplasm</keyword>
<keyword id="KW-0217">Developmental protein</keyword>
<keyword id="KW-0524">Neurogenesis</keyword>
<keyword id="KW-0539">Nucleus</keyword>
<keyword id="KW-0597">Phosphoprotein</keyword>
<keyword id="KW-1185">Reference proteome</keyword>
<keyword id="KW-0879">Wnt signaling pathway</keyword>
<organism>
    <name type="scientific">Xenopus laevis</name>
    <name type="common">African clawed frog</name>
    <dbReference type="NCBI Taxonomy" id="8355"/>
    <lineage>
        <taxon>Eukaryota</taxon>
        <taxon>Metazoa</taxon>
        <taxon>Chordata</taxon>
        <taxon>Craniata</taxon>
        <taxon>Vertebrata</taxon>
        <taxon>Euteleostomi</taxon>
        <taxon>Amphibia</taxon>
        <taxon>Batrachia</taxon>
        <taxon>Anura</taxon>
        <taxon>Pipoidea</taxon>
        <taxon>Pipidae</taxon>
        <taxon>Xenopodinae</taxon>
        <taxon>Xenopus</taxon>
        <taxon>Xenopus</taxon>
    </lineage>
</organism>